<protein>
    <recommendedName>
        <fullName evidence="1">Crossover junction endodeoxyribonuclease RuvC</fullName>
        <ecNumber evidence="1">3.1.21.10</ecNumber>
    </recommendedName>
    <alternativeName>
        <fullName evidence="1">Holliday junction nuclease RuvC</fullName>
    </alternativeName>
    <alternativeName>
        <fullName evidence="1">Holliday junction resolvase RuvC</fullName>
    </alternativeName>
</protein>
<keyword id="KW-0963">Cytoplasm</keyword>
<keyword id="KW-0227">DNA damage</keyword>
<keyword id="KW-0233">DNA recombination</keyword>
<keyword id="KW-0234">DNA repair</keyword>
<keyword id="KW-0238">DNA-binding</keyword>
<keyword id="KW-0255">Endonuclease</keyword>
<keyword id="KW-0378">Hydrolase</keyword>
<keyword id="KW-0460">Magnesium</keyword>
<keyword id="KW-0479">Metal-binding</keyword>
<keyword id="KW-0540">Nuclease</keyword>
<dbReference type="EC" id="3.1.21.10" evidence="1"/>
<dbReference type="EMBL" id="CP000671">
    <property type="protein sequence ID" value="ABQ97777.1"/>
    <property type="molecule type" value="Genomic_DNA"/>
</dbReference>
<dbReference type="SMR" id="A5UAH6"/>
<dbReference type="KEGG" id="hip:CGSHiEE_01485"/>
<dbReference type="HOGENOM" id="CLU_091257_2_1_6"/>
<dbReference type="GO" id="GO:0005737">
    <property type="term" value="C:cytoplasm"/>
    <property type="evidence" value="ECO:0007669"/>
    <property type="project" value="UniProtKB-SubCell"/>
</dbReference>
<dbReference type="GO" id="GO:0048476">
    <property type="term" value="C:Holliday junction resolvase complex"/>
    <property type="evidence" value="ECO:0007669"/>
    <property type="project" value="UniProtKB-UniRule"/>
</dbReference>
<dbReference type="GO" id="GO:0008821">
    <property type="term" value="F:crossover junction DNA endonuclease activity"/>
    <property type="evidence" value="ECO:0007669"/>
    <property type="project" value="UniProtKB-UniRule"/>
</dbReference>
<dbReference type="GO" id="GO:0003677">
    <property type="term" value="F:DNA binding"/>
    <property type="evidence" value="ECO:0007669"/>
    <property type="project" value="UniProtKB-KW"/>
</dbReference>
<dbReference type="GO" id="GO:0000287">
    <property type="term" value="F:magnesium ion binding"/>
    <property type="evidence" value="ECO:0007669"/>
    <property type="project" value="UniProtKB-UniRule"/>
</dbReference>
<dbReference type="GO" id="GO:0006310">
    <property type="term" value="P:DNA recombination"/>
    <property type="evidence" value="ECO:0007669"/>
    <property type="project" value="UniProtKB-UniRule"/>
</dbReference>
<dbReference type="GO" id="GO:0006281">
    <property type="term" value="P:DNA repair"/>
    <property type="evidence" value="ECO:0007669"/>
    <property type="project" value="UniProtKB-UniRule"/>
</dbReference>
<dbReference type="CDD" id="cd16962">
    <property type="entry name" value="RuvC"/>
    <property type="match status" value="1"/>
</dbReference>
<dbReference type="FunFam" id="3.30.420.10:FF:000002">
    <property type="entry name" value="Crossover junction endodeoxyribonuclease RuvC"/>
    <property type="match status" value="1"/>
</dbReference>
<dbReference type="Gene3D" id="3.30.420.10">
    <property type="entry name" value="Ribonuclease H-like superfamily/Ribonuclease H"/>
    <property type="match status" value="1"/>
</dbReference>
<dbReference type="HAMAP" id="MF_00034">
    <property type="entry name" value="RuvC"/>
    <property type="match status" value="1"/>
</dbReference>
<dbReference type="InterPro" id="IPR012337">
    <property type="entry name" value="RNaseH-like_sf"/>
</dbReference>
<dbReference type="InterPro" id="IPR036397">
    <property type="entry name" value="RNaseH_sf"/>
</dbReference>
<dbReference type="InterPro" id="IPR020563">
    <property type="entry name" value="X-over_junc_endoDNase_Mg_BS"/>
</dbReference>
<dbReference type="InterPro" id="IPR002176">
    <property type="entry name" value="X-over_junc_endoDNase_RuvC"/>
</dbReference>
<dbReference type="NCBIfam" id="TIGR00228">
    <property type="entry name" value="ruvC"/>
    <property type="match status" value="1"/>
</dbReference>
<dbReference type="PANTHER" id="PTHR30194">
    <property type="entry name" value="CROSSOVER JUNCTION ENDODEOXYRIBONUCLEASE RUVC"/>
    <property type="match status" value="1"/>
</dbReference>
<dbReference type="PANTHER" id="PTHR30194:SF3">
    <property type="entry name" value="CROSSOVER JUNCTION ENDODEOXYRIBONUCLEASE RUVC"/>
    <property type="match status" value="1"/>
</dbReference>
<dbReference type="Pfam" id="PF02075">
    <property type="entry name" value="RuvC"/>
    <property type="match status" value="1"/>
</dbReference>
<dbReference type="PRINTS" id="PR00696">
    <property type="entry name" value="RSOLVASERUVC"/>
</dbReference>
<dbReference type="SUPFAM" id="SSF53098">
    <property type="entry name" value="Ribonuclease H-like"/>
    <property type="match status" value="1"/>
</dbReference>
<dbReference type="PROSITE" id="PS01321">
    <property type="entry name" value="RUVC"/>
    <property type="match status" value="1"/>
</dbReference>
<gene>
    <name evidence="1" type="primary">ruvC</name>
    <name type="ordered locus">CGSHiEE_01485</name>
</gene>
<name>RUVC_HAEIE</name>
<comment type="function">
    <text evidence="1">The RuvA-RuvB-RuvC complex processes Holliday junction (HJ) DNA during genetic recombination and DNA repair. Endonuclease that resolves HJ intermediates. Cleaves cruciform DNA by making single-stranded nicks across the HJ at symmetrical positions within the homologous arms, yielding a 5'-phosphate and a 3'-hydroxyl group; requires a central core of homology in the junction. The consensus cleavage sequence is 5'-(A/T)TT(C/G)-3'. Cleavage occurs on the 3'-side of the TT dinucleotide at the point of strand exchange. HJ branch migration catalyzed by RuvA-RuvB allows RuvC to scan DNA until it finds its consensus sequence, where it cleaves and resolves the cruciform DNA.</text>
</comment>
<comment type="catalytic activity">
    <reaction evidence="1">
        <text>Endonucleolytic cleavage at a junction such as a reciprocal single-stranded crossover between two homologous DNA duplexes (Holliday junction).</text>
        <dbReference type="EC" id="3.1.21.10"/>
    </reaction>
</comment>
<comment type="cofactor">
    <cofactor evidence="1">
        <name>Mg(2+)</name>
        <dbReference type="ChEBI" id="CHEBI:18420"/>
    </cofactor>
    <text evidence="1">Binds 2 Mg(2+) ion per subunit.</text>
</comment>
<comment type="subunit">
    <text evidence="1">Homodimer which binds Holliday junction (HJ) DNA. The HJ becomes 2-fold symmetrical on binding to RuvC with unstacked arms; it has a different conformation from HJ DNA in complex with RuvA. In the full resolvosome a probable DNA-RuvA(4)-RuvB(12)-RuvC(2) complex forms which resolves the HJ.</text>
</comment>
<comment type="subcellular location">
    <subcellularLocation>
        <location evidence="1">Cytoplasm</location>
    </subcellularLocation>
</comment>
<comment type="similarity">
    <text evidence="1">Belongs to the RuvC family.</text>
</comment>
<organism>
    <name type="scientific">Haemophilus influenzae (strain PittEE)</name>
    <dbReference type="NCBI Taxonomy" id="374930"/>
    <lineage>
        <taxon>Bacteria</taxon>
        <taxon>Pseudomonadati</taxon>
        <taxon>Pseudomonadota</taxon>
        <taxon>Gammaproteobacteria</taxon>
        <taxon>Pasteurellales</taxon>
        <taxon>Pasteurellaceae</taxon>
        <taxon>Haemophilus</taxon>
    </lineage>
</organism>
<evidence type="ECO:0000255" key="1">
    <source>
        <dbReference type="HAMAP-Rule" id="MF_00034"/>
    </source>
</evidence>
<feature type="chain" id="PRO_1000002761" description="Crossover junction endodeoxyribonuclease RuvC">
    <location>
        <begin position="1"/>
        <end position="190"/>
    </location>
</feature>
<feature type="active site" evidence="1">
    <location>
        <position position="8"/>
    </location>
</feature>
<feature type="active site" evidence="1">
    <location>
        <position position="67"/>
    </location>
</feature>
<feature type="active site" evidence="1">
    <location>
        <position position="139"/>
    </location>
</feature>
<feature type="binding site" evidence="1">
    <location>
        <position position="8"/>
    </location>
    <ligand>
        <name>Mg(2+)</name>
        <dbReference type="ChEBI" id="CHEBI:18420"/>
        <label>1</label>
    </ligand>
</feature>
<feature type="binding site" evidence="1">
    <location>
        <position position="67"/>
    </location>
    <ligand>
        <name>Mg(2+)</name>
        <dbReference type="ChEBI" id="CHEBI:18420"/>
        <label>2</label>
    </ligand>
</feature>
<feature type="binding site" evidence="1">
    <location>
        <position position="139"/>
    </location>
    <ligand>
        <name>Mg(2+)</name>
        <dbReference type="ChEBI" id="CHEBI:18420"/>
        <label>1</label>
    </ligand>
</feature>
<reference key="1">
    <citation type="journal article" date="2007" name="Genome Biol.">
        <title>Characterization and modeling of the Haemophilus influenzae core and supragenomes based on the complete genomic sequences of Rd and 12 clinical nontypeable strains.</title>
        <authorList>
            <person name="Hogg J.S."/>
            <person name="Hu F.Z."/>
            <person name="Janto B."/>
            <person name="Boissy R."/>
            <person name="Hayes J."/>
            <person name="Keefe R."/>
            <person name="Post J.C."/>
            <person name="Ehrlich G.D."/>
        </authorList>
    </citation>
    <scope>NUCLEOTIDE SEQUENCE [LARGE SCALE GENOMIC DNA]</scope>
    <source>
        <strain>PittEE</strain>
    </source>
</reference>
<accession>A5UAH6</accession>
<sequence length="190" mass="20897">MSIILGIDPGSRVTGYGVIRQTGRHLEYLGSGAIRTQVEDLPTRLKRIYAGVTEIITQFQPDMFAIEQVFMAKNADSALKLGQARGTAIVAAVNHDLPVFEYAARLVKQTVVGIGSADKVQVQEMVTRILKLSDKPQTDAADALAIAITHAHSIQHSLHIANSVKMTETQEKMTALLKTRYSRGRFRLKI</sequence>
<proteinExistence type="inferred from homology"/>